<organism>
    <name type="scientific">Rattus norvegicus</name>
    <name type="common">Rat</name>
    <dbReference type="NCBI Taxonomy" id="10116"/>
    <lineage>
        <taxon>Eukaryota</taxon>
        <taxon>Metazoa</taxon>
        <taxon>Chordata</taxon>
        <taxon>Craniata</taxon>
        <taxon>Vertebrata</taxon>
        <taxon>Euteleostomi</taxon>
        <taxon>Mammalia</taxon>
        <taxon>Eutheria</taxon>
        <taxon>Euarchontoglires</taxon>
        <taxon>Glires</taxon>
        <taxon>Rodentia</taxon>
        <taxon>Myomorpha</taxon>
        <taxon>Muroidea</taxon>
        <taxon>Muridae</taxon>
        <taxon>Murinae</taxon>
        <taxon>Rattus</taxon>
    </lineage>
</organism>
<feature type="chain" id="PRO_0000248255" description="Taste receptor type 2 member 109">
    <location>
        <begin position="1"/>
        <end position="320"/>
    </location>
</feature>
<feature type="topological domain" description="Extracellular" evidence="2">
    <location>
        <begin position="1"/>
        <end position="14"/>
    </location>
</feature>
<feature type="transmembrane region" description="Helical; Name=1" evidence="2">
    <location>
        <begin position="15"/>
        <end position="35"/>
    </location>
</feature>
<feature type="topological domain" description="Cytoplasmic" evidence="2">
    <location>
        <begin position="36"/>
        <end position="62"/>
    </location>
</feature>
<feature type="transmembrane region" description="Helical; Name=2" evidence="2">
    <location>
        <begin position="63"/>
        <end position="83"/>
    </location>
</feature>
<feature type="topological domain" description="Extracellular" evidence="2">
    <location>
        <begin position="84"/>
        <end position="94"/>
    </location>
</feature>
<feature type="transmembrane region" description="Helical; Name=3" evidence="2">
    <location>
        <begin position="95"/>
        <end position="115"/>
    </location>
</feature>
<feature type="topological domain" description="Cytoplasmic" evidence="2">
    <location>
        <begin position="116"/>
        <end position="135"/>
    </location>
</feature>
<feature type="transmembrane region" description="Helical; Name=4" evidence="2">
    <location>
        <begin position="136"/>
        <end position="156"/>
    </location>
</feature>
<feature type="topological domain" description="Extracellular" evidence="2">
    <location>
        <begin position="157"/>
        <end position="191"/>
    </location>
</feature>
<feature type="transmembrane region" description="Helical; Name=5" evidence="2">
    <location>
        <begin position="192"/>
        <end position="212"/>
    </location>
</feature>
<feature type="topological domain" description="Cytoplasmic" evidence="2">
    <location>
        <begin position="213"/>
        <end position="240"/>
    </location>
</feature>
<feature type="transmembrane region" description="Helical; Name=6" evidence="2">
    <location>
        <begin position="241"/>
        <end position="261"/>
    </location>
</feature>
<feature type="topological domain" description="Extracellular" evidence="2">
    <location>
        <begin position="262"/>
        <end position="270"/>
    </location>
</feature>
<feature type="transmembrane region" description="Helical; Name=7" evidence="2">
    <location>
        <begin position="271"/>
        <end position="291"/>
    </location>
</feature>
<feature type="topological domain" description="Cytoplasmic" evidence="2">
    <location>
        <begin position="292"/>
        <end position="320"/>
    </location>
</feature>
<feature type="glycosylation site" description="N-linked (GlcNAc...) asparagine" evidence="2">
    <location>
        <position position="170"/>
    </location>
</feature>
<reference evidence="4" key="1">
    <citation type="submission" date="2003-11" db="EMBL/GenBank/DDBJ databases">
        <title>Identification of new putative rat taste receptors belonging to the T2R family.</title>
        <authorList>
            <person name="Conte C."/>
            <person name="Ebeling M."/>
            <person name="Marcuz A."/>
            <person name="Andres-Barquin P.J."/>
        </authorList>
    </citation>
    <scope>NUCLEOTIDE SEQUENCE [GENOMIC DNA]</scope>
    <source>
        <strain evidence="4">Sprague-Dawley</strain>
    </source>
</reference>
<accession>Q675B9</accession>
<name>TR109_RAT</name>
<evidence type="ECO:0000250" key="1">
    <source>
        <dbReference type="UniProtKB" id="Q7M707"/>
    </source>
</evidence>
<evidence type="ECO:0000255" key="2"/>
<evidence type="ECO:0000305" key="3"/>
<evidence type="ECO:0000312" key="4">
    <source>
        <dbReference type="EMBL" id="AAS57909.1"/>
    </source>
</evidence>
<keyword id="KW-0297">G-protein coupled receptor</keyword>
<keyword id="KW-0325">Glycoprotein</keyword>
<keyword id="KW-0472">Membrane</keyword>
<keyword id="KW-0675">Receptor</keyword>
<keyword id="KW-1185">Reference proteome</keyword>
<keyword id="KW-0716">Sensory transduction</keyword>
<keyword id="KW-0919">Taste</keyword>
<keyword id="KW-0807">Transducer</keyword>
<keyword id="KW-0812">Transmembrane</keyword>
<keyword id="KW-1133">Transmembrane helix</keyword>
<proteinExistence type="inferred from homology"/>
<comment type="function">
    <text evidence="3">Putative taste receptor which may play a role in the perception of bitterness.</text>
</comment>
<comment type="subcellular location">
    <subcellularLocation>
        <location evidence="3">Membrane</location>
        <topology evidence="3">Multi-pass membrane protein</topology>
    </subcellularLocation>
</comment>
<comment type="miscellaneous">
    <text evidence="3">Several bitter taste receptors are expressed in a single taste receptor cell.</text>
</comment>
<comment type="similarity">
    <text evidence="2">Belongs to the G-protein coupled receptor T2R family.</text>
</comment>
<sequence length="320" mass="37481">MEHFLKSIFDISKNVLPIILFIELIIGIIGNGFMALVHCMDWVKRKKMSLVNQILTTLATSRICLLWFMLLGLLITLLDPDLASARMMIQVASNLWIIANHMSIWLATCLTVFYFLKIANFSSSLFLYLKWRVEKVISVIFLVSLVLLFLNMLLMNLENDMCIAEYHQINISYSFIYHYRADCERRVLRLHIIILSVPFVLSLPTFLLLIFSLWTHHKKMQQHVQGRRDASTTAHFKALQTVIAFLLLYCIFILSMLLQFWKYELMKKPLFILFCHIVYGAFPSFHSYVLILGDMKLRQASLSVLLWLKCRPNYIETLDL</sequence>
<protein>
    <recommendedName>
        <fullName>Taste receptor type 2 member 109</fullName>
        <shortName>T2R109</shortName>
    </recommendedName>
    <alternativeName>
        <fullName>Taste receptor type 2 member 38</fullName>
        <shortName>T2R38</shortName>
    </alternativeName>
</protein>
<dbReference type="EMBL" id="AY486338">
    <property type="protein sequence ID" value="AAS57909.1"/>
    <property type="molecule type" value="Genomic_DNA"/>
</dbReference>
<dbReference type="RefSeq" id="NP_001074408.1">
    <property type="nucleotide sequence ID" value="NM_001080939.1"/>
</dbReference>
<dbReference type="SMR" id="Q675B9"/>
<dbReference type="FunCoup" id="Q675B9">
    <property type="interactions" value="80"/>
</dbReference>
<dbReference type="STRING" id="10116.ENSRNOP00000043062"/>
<dbReference type="GlyCosmos" id="Q675B9">
    <property type="glycosylation" value="1 site, No reported glycans"/>
</dbReference>
<dbReference type="GlyGen" id="Q675B9">
    <property type="glycosylation" value="1 site"/>
</dbReference>
<dbReference type="PaxDb" id="10116-ENSRNOP00000043062"/>
<dbReference type="Ensembl" id="ENSRNOT00000045376.2">
    <property type="protein sequence ID" value="ENSRNOP00000043062.1"/>
    <property type="gene ID" value="ENSRNOG00000032724.2"/>
</dbReference>
<dbReference type="GeneID" id="690572"/>
<dbReference type="KEGG" id="rno:690572"/>
<dbReference type="UCSC" id="RGD:1594689">
    <property type="organism name" value="rat"/>
</dbReference>
<dbReference type="AGR" id="RGD:1594689"/>
<dbReference type="CTD" id="387343"/>
<dbReference type="RGD" id="1594689">
    <property type="gene designation" value="Tas2r109"/>
</dbReference>
<dbReference type="eggNOG" id="ENOG502SKRK">
    <property type="taxonomic scope" value="Eukaryota"/>
</dbReference>
<dbReference type="GeneTree" id="ENSGT01100000263477"/>
<dbReference type="HOGENOM" id="CLU_072337_3_0_1"/>
<dbReference type="InParanoid" id="Q675B9"/>
<dbReference type="OMA" id="EYHQINI"/>
<dbReference type="OrthoDB" id="8876749at2759"/>
<dbReference type="PhylomeDB" id="Q675B9"/>
<dbReference type="TreeFam" id="TF335891"/>
<dbReference type="PRO" id="PR:Q675B9"/>
<dbReference type="Proteomes" id="UP000002494">
    <property type="component" value="Chromosome 4"/>
</dbReference>
<dbReference type="GO" id="GO:0016020">
    <property type="term" value="C:membrane"/>
    <property type="evidence" value="ECO:0000318"/>
    <property type="project" value="GO_Central"/>
</dbReference>
<dbReference type="GO" id="GO:0033038">
    <property type="term" value="F:bitter taste receptor activity"/>
    <property type="evidence" value="ECO:0000318"/>
    <property type="project" value="GO_Central"/>
</dbReference>
<dbReference type="GO" id="GO:0004930">
    <property type="term" value="F:G protein-coupled receptor activity"/>
    <property type="evidence" value="ECO:0007669"/>
    <property type="project" value="UniProtKB-KW"/>
</dbReference>
<dbReference type="GO" id="GO:0001580">
    <property type="term" value="P:detection of chemical stimulus involved in sensory perception of bitter taste"/>
    <property type="evidence" value="ECO:0000318"/>
    <property type="project" value="GO_Central"/>
</dbReference>
<dbReference type="CDD" id="cd15019">
    <property type="entry name" value="7tm_TAS2R14-like"/>
    <property type="match status" value="1"/>
</dbReference>
<dbReference type="FunFam" id="1.20.1070.10:FF:000042">
    <property type="entry name" value="Taste receptor type 2 member 7"/>
    <property type="match status" value="1"/>
</dbReference>
<dbReference type="Gene3D" id="1.20.1070.10">
    <property type="entry name" value="Rhodopsin 7-helix transmembrane proteins"/>
    <property type="match status" value="1"/>
</dbReference>
<dbReference type="InterPro" id="IPR017452">
    <property type="entry name" value="GPCR_Rhodpsn_7TM"/>
</dbReference>
<dbReference type="InterPro" id="IPR007960">
    <property type="entry name" value="TAS2R"/>
</dbReference>
<dbReference type="PANTHER" id="PTHR11394">
    <property type="entry name" value="TASTE RECEPTOR TYPE 2"/>
    <property type="match status" value="1"/>
</dbReference>
<dbReference type="PANTHER" id="PTHR11394:SF25">
    <property type="entry name" value="TASTE RECEPTOR TYPE 2 MEMBER 109"/>
    <property type="match status" value="1"/>
</dbReference>
<dbReference type="Pfam" id="PF05296">
    <property type="entry name" value="TAS2R"/>
    <property type="match status" value="1"/>
</dbReference>
<dbReference type="SUPFAM" id="SSF81321">
    <property type="entry name" value="Family A G protein-coupled receptor-like"/>
    <property type="match status" value="1"/>
</dbReference>
<dbReference type="PROSITE" id="PS50262">
    <property type="entry name" value="G_PROTEIN_RECEP_F1_2"/>
    <property type="match status" value="1"/>
</dbReference>
<gene>
    <name evidence="1" type="primary">Tas2r109</name>
    <name type="synonym">Tas2r38</name>
</gene>